<reference evidence="3" key="1">
    <citation type="journal article" date="2000" name="Plant Cell">
        <title>Proteomics of the chloroplast: systematic identification and targeting analysis of lumenal and peripheral thylakoid proteins.</title>
        <authorList>
            <person name="Peltier J.-B."/>
            <person name="Friso G."/>
            <person name="Kalume D.E."/>
            <person name="Roepstorff P."/>
            <person name="Nilsson F."/>
            <person name="Adamska I."/>
            <person name="van Wijk K.J."/>
        </authorList>
    </citation>
    <scope>PROTEIN SEQUENCE</scope>
    <scope>SUBCELLULAR LOCATION</scope>
    <source>
        <strain evidence="1">cv. De Grace</strain>
        <tissue evidence="1">Leaf</tissue>
    </source>
</reference>
<sequence>AESGFQPVVDRKGD</sequence>
<name>UT204_PEA</name>
<feature type="chain" id="PRO_0000234481" description="Unknown protein from spot 204 of 2D-PAGE of thylakoid">
    <location>
        <begin position="1"/>
        <end position="14" status="greater than"/>
    </location>
</feature>
<feature type="non-terminal residue" evidence="2">
    <location>
        <position position="14"/>
    </location>
</feature>
<organism>
    <name type="scientific">Pisum sativum</name>
    <name type="common">Garden pea</name>
    <name type="synonym">Lathyrus oleraceus</name>
    <dbReference type="NCBI Taxonomy" id="3888"/>
    <lineage>
        <taxon>Eukaryota</taxon>
        <taxon>Viridiplantae</taxon>
        <taxon>Streptophyta</taxon>
        <taxon>Embryophyta</taxon>
        <taxon>Tracheophyta</taxon>
        <taxon>Spermatophyta</taxon>
        <taxon>Magnoliopsida</taxon>
        <taxon>eudicotyledons</taxon>
        <taxon>Gunneridae</taxon>
        <taxon>Pentapetalae</taxon>
        <taxon>rosids</taxon>
        <taxon>fabids</taxon>
        <taxon>Fabales</taxon>
        <taxon>Fabaceae</taxon>
        <taxon>Papilionoideae</taxon>
        <taxon>50 kb inversion clade</taxon>
        <taxon>NPAAA clade</taxon>
        <taxon>Hologalegina</taxon>
        <taxon>IRL clade</taxon>
        <taxon>Fabeae</taxon>
        <taxon>Pisum</taxon>
    </lineage>
</organism>
<protein>
    <recommendedName>
        <fullName>Unknown protein from spot 204 of 2D-PAGE of thylakoid</fullName>
    </recommendedName>
</protein>
<evidence type="ECO:0000269" key="1">
    <source>
    </source>
</evidence>
<evidence type="ECO:0000303" key="2">
    <source>
    </source>
</evidence>
<evidence type="ECO:0000305" key="3"/>
<proteinExistence type="evidence at protein level"/>
<accession>P82340</accession>
<comment type="subcellular location">
    <subcellularLocation>
        <location evidence="1">Plastid</location>
        <location evidence="1">Chloroplast thylakoid</location>
    </subcellularLocation>
</comment>
<comment type="miscellaneous">
    <text evidence="1">On the 2D-gel the determined pI of this protein is: 8.5, its MW is: 16.9 kDa.</text>
</comment>
<dbReference type="GO" id="GO:0009534">
    <property type="term" value="C:chloroplast thylakoid"/>
    <property type="evidence" value="ECO:0007669"/>
    <property type="project" value="UniProtKB-SubCell"/>
</dbReference>
<keyword id="KW-0150">Chloroplast</keyword>
<keyword id="KW-0903">Direct protein sequencing</keyword>
<keyword id="KW-0934">Plastid</keyword>
<keyword id="KW-0793">Thylakoid</keyword>